<organism>
    <name type="scientific">Schizosaccharomyces pombe (strain 972 / ATCC 24843)</name>
    <name type="common">Fission yeast</name>
    <dbReference type="NCBI Taxonomy" id="284812"/>
    <lineage>
        <taxon>Eukaryota</taxon>
        <taxon>Fungi</taxon>
        <taxon>Dikarya</taxon>
        <taxon>Ascomycota</taxon>
        <taxon>Taphrinomycotina</taxon>
        <taxon>Schizosaccharomycetes</taxon>
        <taxon>Schizosaccharomycetales</taxon>
        <taxon>Schizosaccharomycetaceae</taxon>
        <taxon>Schizosaccharomyces</taxon>
    </lineage>
</organism>
<feature type="chain" id="PRO_0000116441" description="Uncharacterized protein C1F7.10">
    <location>
        <begin position="1"/>
        <end position="238"/>
    </location>
</feature>
<gene>
    <name type="ORF">SPAC1F7.10</name>
</gene>
<sequence>MIRILVINPNSTVQMTESVKSVLDDCTPPNVQLEYLTCPPEGPKAIECVSDGVRSAAVLMKYFEDHPPQVDAFLVSCYSDHPLVTTLRETYRKPCTGIMQASILTALSLGRKVSVVTTTKRYEPLLTDGIHAMGISDSVFAGIASTGLAPLELDSKPRAEVDALLARTALRAVNEMGADVICLGCAGMTHMAHVLEKAVGPNIPIIDGTKAGVELLASLVRMNLFTSKQGVYQAVGSD</sequence>
<reference key="1">
    <citation type="journal article" date="2002" name="Nature">
        <title>The genome sequence of Schizosaccharomyces pombe.</title>
        <authorList>
            <person name="Wood V."/>
            <person name="Gwilliam R."/>
            <person name="Rajandream M.A."/>
            <person name="Lyne M.H."/>
            <person name="Lyne R."/>
            <person name="Stewart A."/>
            <person name="Sgouros J.G."/>
            <person name="Peat N."/>
            <person name="Hayles J."/>
            <person name="Baker S.G."/>
            <person name="Basham D."/>
            <person name="Bowman S."/>
            <person name="Brooks K."/>
            <person name="Brown D."/>
            <person name="Brown S."/>
            <person name="Chillingworth T."/>
            <person name="Churcher C.M."/>
            <person name="Collins M."/>
            <person name="Connor R."/>
            <person name="Cronin A."/>
            <person name="Davis P."/>
            <person name="Feltwell T."/>
            <person name="Fraser A."/>
            <person name="Gentles S."/>
            <person name="Goble A."/>
            <person name="Hamlin N."/>
            <person name="Harris D.E."/>
            <person name="Hidalgo J."/>
            <person name="Hodgson G."/>
            <person name="Holroyd S."/>
            <person name="Hornsby T."/>
            <person name="Howarth S."/>
            <person name="Huckle E.J."/>
            <person name="Hunt S."/>
            <person name="Jagels K."/>
            <person name="James K.D."/>
            <person name="Jones L."/>
            <person name="Jones M."/>
            <person name="Leather S."/>
            <person name="McDonald S."/>
            <person name="McLean J."/>
            <person name="Mooney P."/>
            <person name="Moule S."/>
            <person name="Mungall K.L."/>
            <person name="Murphy L.D."/>
            <person name="Niblett D."/>
            <person name="Odell C."/>
            <person name="Oliver K."/>
            <person name="O'Neil S."/>
            <person name="Pearson D."/>
            <person name="Quail M.A."/>
            <person name="Rabbinowitsch E."/>
            <person name="Rutherford K.M."/>
            <person name="Rutter S."/>
            <person name="Saunders D."/>
            <person name="Seeger K."/>
            <person name="Sharp S."/>
            <person name="Skelton J."/>
            <person name="Simmonds M.N."/>
            <person name="Squares R."/>
            <person name="Squares S."/>
            <person name="Stevens K."/>
            <person name="Taylor K."/>
            <person name="Taylor R.G."/>
            <person name="Tivey A."/>
            <person name="Walsh S.V."/>
            <person name="Warren T."/>
            <person name="Whitehead S."/>
            <person name="Woodward J.R."/>
            <person name="Volckaert G."/>
            <person name="Aert R."/>
            <person name="Robben J."/>
            <person name="Grymonprez B."/>
            <person name="Weltjens I."/>
            <person name="Vanstreels E."/>
            <person name="Rieger M."/>
            <person name="Schaefer M."/>
            <person name="Mueller-Auer S."/>
            <person name="Gabel C."/>
            <person name="Fuchs M."/>
            <person name="Duesterhoeft A."/>
            <person name="Fritzc C."/>
            <person name="Holzer E."/>
            <person name="Moestl D."/>
            <person name="Hilbert H."/>
            <person name="Borzym K."/>
            <person name="Langer I."/>
            <person name="Beck A."/>
            <person name="Lehrach H."/>
            <person name="Reinhardt R."/>
            <person name="Pohl T.M."/>
            <person name="Eger P."/>
            <person name="Zimmermann W."/>
            <person name="Wedler H."/>
            <person name="Wambutt R."/>
            <person name="Purnelle B."/>
            <person name="Goffeau A."/>
            <person name="Cadieu E."/>
            <person name="Dreano S."/>
            <person name="Gloux S."/>
            <person name="Lelaure V."/>
            <person name="Mottier S."/>
            <person name="Galibert F."/>
            <person name="Aves S.J."/>
            <person name="Xiang Z."/>
            <person name="Hunt C."/>
            <person name="Moore K."/>
            <person name="Hurst S.M."/>
            <person name="Lucas M."/>
            <person name="Rochet M."/>
            <person name="Gaillardin C."/>
            <person name="Tallada V.A."/>
            <person name="Garzon A."/>
            <person name="Thode G."/>
            <person name="Daga R.R."/>
            <person name="Cruzado L."/>
            <person name="Jimenez J."/>
            <person name="Sanchez M."/>
            <person name="del Rey F."/>
            <person name="Benito J."/>
            <person name="Dominguez A."/>
            <person name="Revuelta J.L."/>
            <person name="Moreno S."/>
            <person name="Armstrong J."/>
            <person name="Forsburg S.L."/>
            <person name="Cerutti L."/>
            <person name="Lowe T."/>
            <person name="McCombie W.R."/>
            <person name="Paulsen I."/>
            <person name="Potashkin J."/>
            <person name="Shpakovski G.V."/>
            <person name="Ussery D."/>
            <person name="Barrell B.G."/>
            <person name="Nurse P."/>
        </authorList>
    </citation>
    <scope>NUCLEOTIDE SEQUENCE [LARGE SCALE GENOMIC DNA]</scope>
    <source>
        <strain>972 / ATCC 24843</strain>
    </source>
</reference>
<accession>Q09921</accession>
<protein>
    <recommendedName>
        <fullName>Uncharacterized protein C1F7.10</fullName>
    </recommendedName>
</protein>
<dbReference type="EMBL" id="CU329670">
    <property type="protein sequence ID" value="CAA91957.1"/>
    <property type="molecule type" value="Genomic_DNA"/>
</dbReference>
<dbReference type="PIR" id="S62582">
    <property type="entry name" value="S62582"/>
</dbReference>
<dbReference type="RefSeq" id="NP_594496.1">
    <property type="nucleotide sequence ID" value="NM_001019925.2"/>
</dbReference>
<dbReference type="SMR" id="Q09921"/>
<dbReference type="BioGRID" id="278313">
    <property type="interactions" value="11"/>
</dbReference>
<dbReference type="FunCoup" id="Q09921">
    <property type="interactions" value="5"/>
</dbReference>
<dbReference type="STRING" id="284812.Q09921"/>
<dbReference type="iPTMnet" id="Q09921"/>
<dbReference type="PaxDb" id="4896-SPAC1F7.10.1"/>
<dbReference type="EnsemblFungi" id="SPAC1F7.10.1">
    <property type="protein sequence ID" value="SPAC1F7.10.1:pep"/>
    <property type="gene ID" value="SPAC1F7.10"/>
</dbReference>
<dbReference type="KEGG" id="spo:2541822"/>
<dbReference type="PomBase" id="SPAC1F7.10"/>
<dbReference type="VEuPathDB" id="FungiDB:SPAC1F7.10"/>
<dbReference type="eggNOG" id="KOG0806">
    <property type="taxonomic scope" value="Eukaryota"/>
</dbReference>
<dbReference type="HOGENOM" id="CLU_053002_1_0_1"/>
<dbReference type="InParanoid" id="Q09921"/>
<dbReference type="OMA" id="FEHHCAA"/>
<dbReference type="PhylomeDB" id="Q09921"/>
<dbReference type="PRO" id="PR:Q09921"/>
<dbReference type="Proteomes" id="UP000002485">
    <property type="component" value="Chromosome I"/>
</dbReference>
<dbReference type="GO" id="GO:0005829">
    <property type="term" value="C:cytosol"/>
    <property type="evidence" value="ECO:0007005"/>
    <property type="project" value="PomBase"/>
</dbReference>
<dbReference type="GO" id="GO:0005634">
    <property type="term" value="C:nucleus"/>
    <property type="evidence" value="ECO:0007005"/>
    <property type="project" value="PomBase"/>
</dbReference>
<dbReference type="GO" id="GO:0047661">
    <property type="term" value="F:amino-acid racemase activity"/>
    <property type="evidence" value="ECO:0007669"/>
    <property type="project" value="InterPro"/>
</dbReference>
<dbReference type="FunFam" id="3.40.50.12500:FF:000001">
    <property type="entry name" value="Putative hydantoin racemase"/>
    <property type="match status" value="1"/>
</dbReference>
<dbReference type="Gene3D" id="3.40.50.12500">
    <property type="match status" value="1"/>
</dbReference>
<dbReference type="InterPro" id="IPR015942">
    <property type="entry name" value="Asp/Glu/hydantoin_racemase"/>
</dbReference>
<dbReference type="InterPro" id="IPR001920">
    <property type="entry name" value="Asp/Glu_race"/>
</dbReference>
<dbReference type="InterPro" id="IPR052186">
    <property type="entry name" value="Hydantoin_racemase-like"/>
</dbReference>
<dbReference type="InterPro" id="IPR053714">
    <property type="entry name" value="Iso_Racemase_Enz_sf"/>
</dbReference>
<dbReference type="PANTHER" id="PTHR28047:SF6">
    <property type="entry name" value="CN HYDROLASE DOMAIN-CONTAINING PROTEIN"/>
    <property type="match status" value="1"/>
</dbReference>
<dbReference type="PANTHER" id="PTHR28047">
    <property type="entry name" value="PROTEIN DCG1"/>
    <property type="match status" value="1"/>
</dbReference>
<dbReference type="Pfam" id="PF01177">
    <property type="entry name" value="Asp_Glu_race"/>
    <property type="match status" value="1"/>
</dbReference>
<dbReference type="SUPFAM" id="SSF53681">
    <property type="entry name" value="Aspartate/glutamate racemase"/>
    <property type="match status" value="1"/>
</dbReference>
<evidence type="ECO:0000305" key="1"/>
<name>YAKA_SCHPO</name>
<proteinExistence type="inferred from homology"/>
<keyword id="KW-1185">Reference proteome</keyword>
<comment type="similarity">
    <text evidence="1">Belongs to the HyuE racemase family.</text>
</comment>